<protein>
    <recommendedName>
        <fullName evidence="1">Methionine import ATP-binding protein MetN 1</fullName>
        <ecNumber evidence="1">7.4.2.11</ecNumber>
    </recommendedName>
</protein>
<accession>Q3JPZ4</accession>
<dbReference type="EC" id="7.4.2.11" evidence="1"/>
<dbReference type="EMBL" id="CP000124">
    <property type="protein sequence ID" value="ABA49120.1"/>
    <property type="molecule type" value="Genomic_DNA"/>
</dbReference>
<dbReference type="RefSeq" id="WP_004190044.1">
    <property type="nucleotide sequence ID" value="NC_007434.1"/>
</dbReference>
<dbReference type="SMR" id="Q3JPZ4"/>
<dbReference type="EnsemblBacteria" id="ABA49120">
    <property type="protein sequence ID" value="ABA49120"/>
    <property type="gene ID" value="BURPS1710b_2980"/>
</dbReference>
<dbReference type="KEGG" id="bpm:BURPS1710b_2980"/>
<dbReference type="HOGENOM" id="CLU_000604_1_3_4"/>
<dbReference type="Proteomes" id="UP000002700">
    <property type="component" value="Chromosome I"/>
</dbReference>
<dbReference type="GO" id="GO:0005886">
    <property type="term" value="C:plasma membrane"/>
    <property type="evidence" value="ECO:0007669"/>
    <property type="project" value="UniProtKB-SubCell"/>
</dbReference>
<dbReference type="GO" id="GO:0033232">
    <property type="term" value="F:ABC-type D-methionine transporter activity"/>
    <property type="evidence" value="ECO:0007669"/>
    <property type="project" value="UniProtKB-EC"/>
</dbReference>
<dbReference type="GO" id="GO:0005524">
    <property type="term" value="F:ATP binding"/>
    <property type="evidence" value="ECO:0007669"/>
    <property type="project" value="UniProtKB-KW"/>
</dbReference>
<dbReference type="GO" id="GO:0016887">
    <property type="term" value="F:ATP hydrolysis activity"/>
    <property type="evidence" value="ECO:0007669"/>
    <property type="project" value="InterPro"/>
</dbReference>
<dbReference type="CDD" id="cd03258">
    <property type="entry name" value="ABC_MetN_methionine_transporter"/>
    <property type="match status" value="1"/>
</dbReference>
<dbReference type="FunFam" id="3.40.50.300:FF:000056">
    <property type="entry name" value="Cell division ATP-binding protein FtsE"/>
    <property type="match status" value="1"/>
</dbReference>
<dbReference type="Gene3D" id="3.30.70.260">
    <property type="match status" value="1"/>
</dbReference>
<dbReference type="Gene3D" id="3.40.50.300">
    <property type="entry name" value="P-loop containing nucleotide triphosphate hydrolases"/>
    <property type="match status" value="1"/>
</dbReference>
<dbReference type="InterPro" id="IPR003593">
    <property type="entry name" value="AAA+_ATPase"/>
</dbReference>
<dbReference type="InterPro" id="IPR003439">
    <property type="entry name" value="ABC_transporter-like_ATP-bd"/>
</dbReference>
<dbReference type="InterPro" id="IPR017871">
    <property type="entry name" value="ABC_transporter-like_CS"/>
</dbReference>
<dbReference type="InterPro" id="IPR045865">
    <property type="entry name" value="ACT-like_dom_sf"/>
</dbReference>
<dbReference type="InterPro" id="IPR041701">
    <property type="entry name" value="MetN_ABC"/>
</dbReference>
<dbReference type="InterPro" id="IPR050086">
    <property type="entry name" value="MetN_ABC_transporter-like"/>
</dbReference>
<dbReference type="InterPro" id="IPR018449">
    <property type="entry name" value="NIL_domain"/>
</dbReference>
<dbReference type="InterPro" id="IPR027417">
    <property type="entry name" value="P-loop_NTPase"/>
</dbReference>
<dbReference type="PANTHER" id="PTHR43166">
    <property type="entry name" value="AMINO ACID IMPORT ATP-BINDING PROTEIN"/>
    <property type="match status" value="1"/>
</dbReference>
<dbReference type="PANTHER" id="PTHR43166:SF30">
    <property type="entry name" value="METHIONINE IMPORT ATP-BINDING PROTEIN METN"/>
    <property type="match status" value="1"/>
</dbReference>
<dbReference type="Pfam" id="PF00005">
    <property type="entry name" value="ABC_tran"/>
    <property type="match status" value="1"/>
</dbReference>
<dbReference type="Pfam" id="PF09383">
    <property type="entry name" value="NIL"/>
    <property type="match status" value="1"/>
</dbReference>
<dbReference type="SMART" id="SM00382">
    <property type="entry name" value="AAA"/>
    <property type="match status" value="1"/>
</dbReference>
<dbReference type="SMART" id="SM00930">
    <property type="entry name" value="NIL"/>
    <property type="match status" value="1"/>
</dbReference>
<dbReference type="SUPFAM" id="SSF55021">
    <property type="entry name" value="ACT-like"/>
    <property type="match status" value="1"/>
</dbReference>
<dbReference type="SUPFAM" id="SSF52540">
    <property type="entry name" value="P-loop containing nucleoside triphosphate hydrolases"/>
    <property type="match status" value="1"/>
</dbReference>
<dbReference type="PROSITE" id="PS00211">
    <property type="entry name" value="ABC_TRANSPORTER_1"/>
    <property type="match status" value="1"/>
</dbReference>
<dbReference type="PROSITE" id="PS50893">
    <property type="entry name" value="ABC_TRANSPORTER_2"/>
    <property type="match status" value="1"/>
</dbReference>
<dbReference type="PROSITE" id="PS51264">
    <property type="entry name" value="METN"/>
    <property type="match status" value="1"/>
</dbReference>
<reference key="1">
    <citation type="journal article" date="2010" name="Genome Biol. Evol.">
        <title>Continuing evolution of Burkholderia mallei through genome reduction and large-scale rearrangements.</title>
        <authorList>
            <person name="Losada L."/>
            <person name="Ronning C.M."/>
            <person name="DeShazer D."/>
            <person name="Woods D."/>
            <person name="Fedorova N."/>
            <person name="Kim H.S."/>
            <person name="Shabalina S.A."/>
            <person name="Pearson T.R."/>
            <person name="Brinkac L."/>
            <person name="Tan P."/>
            <person name="Nandi T."/>
            <person name="Crabtree J."/>
            <person name="Badger J."/>
            <person name="Beckstrom-Sternberg S."/>
            <person name="Saqib M."/>
            <person name="Schutzer S.E."/>
            <person name="Keim P."/>
            <person name="Nierman W.C."/>
        </authorList>
    </citation>
    <scope>NUCLEOTIDE SEQUENCE [LARGE SCALE GENOMIC DNA]</scope>
    <source>
        <strain>1710b</strain>
    </source>
</reference>
<keyword id="KW-0029">Amino-acid transport</keyword>
<keyword id="KW-0067">ATP-binding</keyword>
<keyword id="KW-0997">Cell inner membrane</keyword>
<keyword id="KW-1003">Cell membrane</keyword>
<keyword id="KW-0472">Membrane</keyword>
<keyword id="KW-0547">Nucleotide-binding</keyword>
<keyword id="KW-1278">Translocase</keyword>
<keyword id="KW-0813">Transport</keyword>
<organism>
    <name type="scientific">Burkholderia pseudomallei (strain 1710b)</name>
    <dbReference type="NCBI Taxonomy" id="320372"/>
    <lineage>
        <taxon>Bacteria</taxon>
        <taxon>Pseudomonadati</taxon>
        <taxon>Pseudomonadota</taxon>
        <taxon>Betaproteobacteria</taxon>
        <taxon>Burkholderiales</taxon>
        <taxon>Burkholderiaceae</taxon>
        <taxon>Burkholderia</taxon>
        <taxon>pseudomallei group</taxon>
    </lineage>
</organism>
<feature type="chain" id="PRO_0000270267" description="Methionine import ATP-binding protein MetN 1">
    <location>
        <begin position="1"/>
        <end position="344"/>
    </location>
</feature>
<feature type="domain" description="ABC transporter" evidence="1">
    <location>
        <begin position="2"/>
        <end position="241"/>
    </location>
</feature>
<feature type="binding site" evidence="1">
    <location>
        <begin position="38"/>
        <end position="45"/>
    </location>
    <ligand>
        <name>ATP</name>
        <dbReference type="ChEBI" id="CHEBI:30616"/>
    </ligand>
</feature>
<gene>
    <name evidence="1" type="primary">metN1</name>
    <name type="ordered locus">BURPS1710b_2980</name>
</gene>
<sequence length="344" mass="37567">MIEIRNLSQRFEGPRGWIEALHNVNLTIPQGEVFGIIGRSGAGKSTLVRTINLLTRPSEGSVFVGGRDLTQLSAAELRGARRDIGMIFQHFNLLSSRTVFDNVALPLELAGVKRAQIEATVLPLLDLVGLAAQKDRYPAQISGGQKQRVGIARALASKPKVLLSDEATSALDPETTRAILDLLRRINRELGLTIVLITHQMEVIKDVCDRVAVLDAGRVVEEGNVIDVFMRPHHEVTRALIGDVIAQELPPAMKARVAERLKTGSGHLLRLAFTGSGVDQPILSETIRRYELDFNILHGQIDEIQGRAFGSLAVLATGEPGKVGQAFAYLREQGVVVEELSYVE</sequence>
<comment type="function">
    <text evidence="1">Part of the ABC transporter complex MetNIQ involved in methionine import. Responsible for energy coupling to the transport system.</text>
</comment>
<comment type="catalytic activity">
    <reaction evidence="1">
        <text>L-methionine(out) + ATP + H2O = L-methionine(in) + ADP + phosphate + H(+)</text>
        <dbReference type="Rhea" id="RHEA:29779"/>
        <dbReference type="ChEBI" id="CHEBI:15377"/>
        <dbReference type="ChEBI" id="CHEBI:15378"/>
        <dbReference type="ChEBI" id="CHEBI:30616"/>
        <dbReference type="ChEBI" id="CHEBI:43474"/>
        <dbReference type="ChEBI" id="CHEBI:57844"/>
        <dbReference type="ChEBI" id="CHEBI:456216"/>
        <dbReference type="EC" id="7.4.2.11"/>
    </reaction>
</comment>
<comment type="catalytic activity">
    <reaction evidence="1">
        <text>D-methionine(out) + ATP + H2O = D-methionine(in) + ADP + phosphate + H(+)</text>
        <dbReference type="Rhea" id="RHEA:29767"/>
        <dbReference type="ChEBI" id="CHEBI:15377"/>
        <dbReference type="ChEBI" id="CHEBI:15378"/>
        <dbReference type="ChEBI" id="CHEBI:30616"/>
        <dbReference type="ChEBI" id="CHEBI:43474"/>
        <dbReference type="ChEBI" id="CHEBI:57932"/>
        <dbReference type="ChEBI" id="CHEBI:456216"/>
        <dbReference type="EC" id="7.4.2.11"/>
    </reaction>
</comment>
<comment type="subunit">
    <text evidence="1">The complex is composed of two ATP-binding proteins (MetN), two transmembrane proteins (MetI) and a solute-binding protein (MetQ).</text>
</comment>
<comment type="subcellular location">
    <subcellularLocation>
        <location evidence="1">Cell inner membrane</location>
        <topology evidence="1">Peripheral membrane protein</topology>
    </subcellularLocation>
</comment>
<comment type="similarity">
    <text evidence="1">Belongs to the ABC transporter superfamily. Methionine importer (TC 3.A.1.24) family.</text>
</comment>
<name>METN1_BURP1</name>
<proteinExistence type="inferred from homology"/>
<evidence type="ECO:0000255" key="1">
    <source>
        <dbReference type="HAMAP-Rule" id="MF_01719"/>
    </source>
</evidence>